<proteinExistence type="inferred from homology"/>
<evidence type="ECO:0000255" key="1">
    <source>
        <dbReference type="HAMAP-Rule" id="MF_00541"/>
    </source>
</evidence>
<name>RHAA_OCEIH</name>
<dbReference type="EC" id="5.3.1.14" evidence="1"/>
<dbReference type="EMBL" id="BA000028">
    <property type="protein sequence ID" value="BAC12452.1"/>
    <property type="molecule type" value="Genomic_DNA"/>
</dbReference>
<dbReference type="RefSeq" id="WP_011064900.1">
    <property type="nucleotide sequence ID" value="NC_004193.1"/>
</dbReference>
<dbReference type="SMR" id="Q8ESX0"/>
<dbReference type="STRING" id="221109.gene:10732699"/>
<dbReference type="KEGG" id="oih:OB0496"/>
<dbReference type="eggNOG" id="COG4806">
    <property type="taxonomic scope" value="Bacteria"/>
</dbReference>
<dbReference type="HOGENOM" id="CLU_052790_0_0_9"/>
<dbReference type="OrthoDB" id="9766697at2"/>
<dbReference type="PhylomeDB" id="Q8ESX0"/>
<dbReference type="UniPathway" id="UPA00541">
    <property type="reaction ID" value="UER00601"/>
</dbReference>
<dbReference type="Proteomes" id="UP000000822">
    <property type="component" value="Chromosome"/>
</dbReference>
<dbReference type="GO" id="GO:0005737">
    <property type="term" value="C:cytoplasm"/>
    <property type="evidence" value="ECO:0007669"/>
    <property type="project" value="UniProtKB-SubCell"/>
</dbReference>
<dbReference type="GO" id="GO:0008740">
    <property type="term" value="F:L-rhamnose isomerase activity"/>
    <property type="evidence" value="ECO:0007669"/>
    <property type="project" value="UniProtKB-UniRule"/>
</dbReference>
<dbReference type="GO" id="GO:0030145">
    <property type="term" value="F:manganese ion binding"/>
    <property type="evidence" value="ECO:0007669"/>
    <property type="project" value="UniProtKB-UniRule"/>
</dbReference>
<dbReference type="GO" id="GO:0019324">
    <property type="term" value="P:L-lyxose metabolic process"/>
    <property type="evidence" value="ECO:0007669"/>
    <property type="project" value="TreeGrafter"/>
</dbReference>
<dbReference type="GO" id="GO:0019301">
    <property type="term" value="P:rhamnose catabolic process"/>
    <property type="evidence" value="ECO:0007669"/>
    <property type="project" value="UniProtKB-UniRule"/>
</dbReference>
<dbReference type="Gene3D" id="3.20.20.150">
    <property type="entry name" value="Divalent-metal-dependent TIM barrel enzymes"/>
    <property type="match status" value="1"/>
</dbReference>
<dbReference type="HAMAP" id="MF_00541">
    <property type="entry name" value="RhaA"/>
    <property type="match status" value="1"/>
</dbReference>
<dbReference type="InterPro" id="IPR050337">
    <property type="entry name" value="L-rhamnose_isomerase"/>
</dbReference>
<dbReference type="InterPro" id="IPR009308">
    <property type="entry name" value="Rhamnose_isomerase"/>
</dbReference>
<dbReference type="InterPro" id="IPR036237">
    <property type="entry name" value="Xyl_isomerase-like_sf"/>
</dbReference>
<dbReference type="NCBIfam" id="NF002203">
    <property type="entry name" value="PRK01076.1"/>
    <property type="match status" value="1"/>
</dbReference>
<dbReference type="NCBIfam" id="TIGR01748">
    <property type="entry name" value="rhaA"/>
    <property type="match status" value="1"/>
</dbReference>
<dbReference type="PANTHER" id="PTHR30268">
    <property type="entry name" value="L-RHAMNOSE ISOMERASE"/>
    <property type="match status" value="1"/>
</dbReference>
<dbReference type="PANTHER" id="PTHR30268:SF0">
    <property type="entry name" value="L-RHAMNOSE ISOMERASE"/>
    <property type="match status" value="1"/>
</dbReference>
<dbReference type="Pfam" id="PF06134">
    <property type="entry name" value="RhaA"/>
    <property type="match status" value="1"/>
</dbReference>
<dbReference type="SUPFAM" id="SSF51658">
    <property type="entry name" value="Xylose isomerase-like"/>
    <property type="match status" value="1"/>
</dbReference>
<keyword id="KW-0963">Cytoplasm</keyword>
<keyword id="KW-0413">Isomerase</keyword>
<keyword id="KW-0464">Manganese</keyword>
<keyword id="KW-0479">Metal-binding</keyword>
<keyword id="KW-1185">Reference proteome</keyword>
<keyword id="KW-0684">Rhamnose metabolism</keyword>
<organism>
    <name type="scientific">Oceanobacillus iheyensis (strain DSM 14371 / CIP 107618 / JCM 11309 / KCTC 3954 / HTE831)</name>
    <dbReference type="NCBI Taxonomy" id="221109"/>
    <lineage>
        <taxon>Bacteria</taxon>
        <taxon>Bacillati</taxon>
        <taxon>Bacillota</taxon>
        <taxon>Bacilli</taxon>
        <taxon>Bacillales</taxon>
        <taxon>Bacillaceae</taxon>
        <taxon>Oceanobacillus</taxon>
    </lineage>
</organism>
<sequence length="417" mass="47814">MDVKQNYEQAKKQYEKWGVNVEDALEKLKQIPISIHCWQGDDVTGFEVNQQELSGGIDVTGNYPGKATTPEELRDDLDKALSLIPGMHRVNLHAIYAETNGEAVERDEIEPKHFENWVKWAKENGLGLDFNPTLFSHPKADDGLTLAHPNKEIRDFWIRHTIASRKIAAYMGKELGTSALTNIWTPDGYKDIPSDRLTPRKRLEDSLNQIFEEEIDKEYNVDAVESKLFGIGSEAYVVGSHEFYMGYALKNNKLCLLDTGHYHPTEMVSNKISSMLLYSDELALHVSRPVRWDSDHVVILDDELREIGLEIVRNDALDKVRIGLDFFDASINRIAAWTIGTRNMIKSLLYALLTPNEHLKQLQEEGNFTDRLAIMEELKTYPFGAIWDYYCESMNVPVGESWLTEVKEYEKEVLSKR</sequence>
<comment type="function">
    <text evidence="1">Catalyzes the interconversion of L-rhamnose and L-rhamnulose.</text>
</comment>
<comment type="catalytic activity">
    <reaction evidence="1">
        <text>L-rhamnopyranose = L-rhamnulose</text>
        <dbReference type="Rhea" id="RHEA:23160"/>
        <dbReference type="ChEBI" id="CHEBI:17897"/>
        <dbReference type="ChEBI" id="CHEBI:62346"/>
        <dbReference type="EC" id="5.3.1.14"/>
    </reaction>
</comment>
<comment type="cofactor">
    <cofactor evidence="1">
        <name>Mn(2+)</name>
        <dbReference type="ChEBI" id="CHEBI:29035"/>
    </cofactor>
    <text evidence="1">Binds 1 Mn(2+) ion per subunit.</text>
</comment>
<comment type="pathway">
    <text evidence="1">Carbohydrate degradation; L-rhamnose degradation; glycerone phosphate from L-rhamnose: step 1/3.</text>
</comment>
<comment type="subcellular location">
    <subcellularLocation>
        <location evidence="1">Cytoplasm</location>
    </subcellularLocation>
</comment>
<comment type="similarity">
    <text evidence="1">Belongs to the rhamnose isomerase family.</text>
</comment>
<feature type="chain" id="PRO_0000090562" description="L-rhamnose isomerase">
    <location>
        <begin position="1"/>
        <end position="417"/>
    </location>
</feature>
<feature type="binding site" evidence="1">
    <location>
        <position position="261"/>
    </location>
    <ligand>
        <name>Mn(2+)</name>
        <dbReference type="ChEBI" id="CHEBI:29035"/>
    </ligand>
</feature>
<feature type="binding site" evidence="1">
    <location>
        <position position="293"/>
    </location>
    <ligand>
        <name>Mn(2+)</name>
        <dbReference type="ChEBI" id="CHEBI:29035"/>
    </ligand>
</feature>
<feature type="binding site" evidence="1">
    <location>
        <position position="295"/>
    </location>
    <ligand>
        <name>Mn(2+)</name>
        <dbReference type="ChEBI" id="CHEBI:29035"/>
    </ligand>
</feature>
<accession>Q8ESX0</accession>
<gene>
    <name evidence="1" type="primary">rhaA</name>
    <name type="ordered locus">OB0496</name>
</gene>
<protein>
    <recommendedName>
        <fullName evidence="1">L-rhamnose isomerase</fullName>
        <ecNumber evidence="1">5.3.1.14</ecNumber>
    </recommendedName>
</protein>
<reference key="1">
    <citation type="journal article" date="2002" name="Nucleic Acids Res.">
        <title>Genome sequence of Oceanobacillus iheyensis isolated from the Iheya Ridge and its unexpected adaptive capabilities to extreme environments.</title>
        <authorList>
            <person name="Takami H."/>
            <person name="Takaki Y."/>
            <person name="Uchiyama I."/>
        </authorList>
    </citation>
    <scope>NUCLEOTIDE SEQUENCE [LARGE SCALE GENOMIC DNA]</scope>
    <source>
        <strain>DSM 14371 / CIP 107618 / JCM 11309 / KCTC 3954 / HTE831</strain>
    </source>
</reference>